<name>CLPX_BART1</name>
<keyword id="KW-0067">ATP-binding</keyword>
<keyword id="KW-0143">Chaperone</keyword>
<keyword id="KW-0479">Metal-binding</keyword>
<keyword id="KW-0547">Nucleotide-binding</keyword>
<keyword id="KW-0862">Zinc</keyword>
<evidence type="ECO:0000255" key="1">
    <source>
        <dbReference type="HAMAP-Rule" id="MF_00175"/>
    </source>
</evidence>
<evidence type="ECO:0000255" key="2">
    <source>
        <dbReference type="PROSITE-ProRule" id="PRU01250"/>
    </source>
</evidence>
<protein>
    <recommendedName>
        <fullName evidence="1">ATP-dependent Clp protease ATP-binding subunit ClpX</fullName>
    </recommendedName>
</protein>
<feature type="chain" id="PRO_1000077144" description="ATP-dependent Clp protease ATP-binding subunit ClpX">
    <location>
        <begin position="1"/>
        <end position="424"/>
    </location>
</feature>
<feature type="domain" description="ClpX-type ZB" evidence="2">
    <location>
        <begin position="5"/>
        <end position="58"/>
    </location>
</feature>
<feature type="binding site" evidence="2">
    <location>
        <position position="17"/>
    </location>
    <ligand>
        <name>Zn(2+)</name>
        <dbReference type="ChEBI" id="CHEBI:29105"/>
    </ligand>
</feature>
<feature type="binding site" evidence="2">
    <location>
        <position position="20"/>
    </location>
    <ligand>
        <name>Zn(2+)</name>
        <dbReference type="ChEBI" id="CHEBI:29105"/>
    </ligand>
</feature>
<feature type="binding site" evidence="2">
    <location>
        <position position="39"/>
    </location>
    <ligand>
        <name>Zn(2+)</name>
        <dbReference type="ChEBI" id="CHEBI:29105"/>
    </ligand>
</feature>
<feature type="binding site" evidence="2">
    <location>
        <position position="42"/>
    </location>
    <ligand>
        <name>Zn(2+)</name>
        <dbReference type="ChEBI" id="CHEBI:29105"/>
    </ligand>
</feature>
<feature type="binding site" evidence="1">
    <location>
        <begin position="121"/>
        <end position="128"/>
    </location>
    <ligand>
        <name>ATP</name>
        <dbReference type="ChEBI" id="CHEBI:30616"/>
    </ligand>
</feature>
<accession>A9ISA8</accession>
<dbReference type="EMBL" id="AM260525">
    <property type="protein sequence ID" value="CAK01281.1"/>
    <property type="molecule type" value="Genomic_DNA"/>
</dbReference>
<dbReference type="RefSeq" id="WP_012231439.1">
    <property type="nucleotide sequence ID" value="NC_010161.1"/>
</dbReference>
<dbReference type="SMR" id="A9ISA8"/>
<dbReference type="KEGG" id="btr:BT_0877"/>
<dbReference type="eggNOG" id="COG1219">
    <property type="taxonomic scope" value="Bacteria"/>
</dbReference>
<dbReference type="HOGENOM" id="CLU_014218_8_2_5"/>
<dbReference type="Proteomes" id="UP000001592">
    <property type="component" value="Chromosome"/>
</dbReference>
<dbReference type="GO" id="GO:0009376">
    <property type="term" value="C:HslUV protease complex"/>
    <property type="evidence" value="ECO:0007669"/>
    <property type="project" value="TreeGrafter"/>
</dbReference>
<dbReference type="GO" id="GO:0005524">
    <property type="term" value="F:ATP binding"/>
    <property type="evidence" value="ECO:0007669"/>
    <property type="project" value="UniProtKB-UniRule"/>
</dbReference>
<dbReference type="GO" id="GO:0016887">
    <property type="term" value="F:ATP hydrolysis activity"/>
    <property type="evidence" value="ECO:0007669"/>
    <property type="project" value="InterPro"/>
</dbReference>
<dbReference type="GO" id="GO:0140662">
    <property type="term" value="F:ATP-dependent protein folding chaperone"/>
    <property type="evidence" value="ECO:0007669"/>
    <property type="project" value="InterPro"/>
</dbReference>
<dbReference type="GO" id="GO:0046983">
    <property type="term" value="F:protein dimerization activity"/>
    <property type="evidence" value="ECO:0007669"/>
    <property type="project" value="InterPro"/>
</dbReference>
<dbReference type="GO" id="GO:0051082">
    <property type="term" value="F:unfolded protein binding"/>
    <property type="evidence" value="ECO:0007669"/>
    <property type="project" value="UniProtKB-UniRule"/>
</dbReference>
<dbReference type="GO" id="GO:0008270">
    <property type="term" value="F:zinc ion binding"/>
    <property type="evidence" value="ECO:0007669"/>
    <property type="project" value="InterPro"/>
</dbReference>
<dbReference type="GO" id="GO:0051301">
    <property type="term" value="P:cell division"/>
    <property type="evidence" value="ECO:0007669"/>
    <property type="project" value="TreeGrafter"/>
</dbReference>
<dbReference type="GO" id="GO:0051603">
    <property type="term" value="P:proteolysis involved in protein catabolic process"/>
    <property type="evidence" value="ECO:0007669"/>
    <property type="project" value="TreeGrafter"/>
</dbReference>
<dbReference type="CDD" id="cd19497">
    <property type="entry name" value="RecA-like_ClpX"/>
    <property type="match status" value="1"/>
</dbReference>
<dbReference type="FunFam" id="1.10.8.60:FF:000002">
    <property type="entry name" value="ATP-dependent Clp protease ATP-binding subunit ClpX"/>
    <property type="match status" value="1"/>
</dbReference>
<dbReference type="FunFam" id="3.40.50.300:FF:000005">
    <property type="entry name" value="ATP-dependent Clp protease ATP-binding subunit ClpX"/>
    <property type="match status" value="1"/>
</dbReference>
<dbReference type="Gene3D" id="1.10.8.60">
    <property type="match status" value="1"/>
</dbReference>
<dbReference type="Gene3D" id="6.20.220.10">
    <property type="entry name" value="ClpX chaperone, C4-type zinc finger domain"/>
    <property type="match status" value="1"/>
</dbReference>
<dbReference type="Gene3D" id="3.40.50.300">
    <property type="entry name" value="P-loop containing nucleotide triphosphate hydrolases"/>
    <property type="match status" value="1"/>
</dbReference>
<dbReference type="HAMAP" id="MF_00175">
    <property type="entry name" value="ClpX"/>
    <property type="match status" value="1"/>
</dbReference>
<dbReference type="InterPro" id="IPR003593">
    <property type="entry name" value="AAA+_ATPase"/>
</dbReference>
<dbReference type="InterPro" id="IPR050052">
    <property type="entry name" value="ATP-dep_Clp_protease_ClpX"/>
</dbReference>
<dbReference type="InterPro" id="IPR003959">
    <property type="entry name" value="ATPase_AAA_core"/>
</dbReference>
<dbReference type="InterPro" id="IPR019489">
    <property type="entry name" value="Clp_ATPase_C"/>
</dbReference>
<dbReference type="InterPro" id="IPR004487">
    <property type="entry name" value="Clp_protease_ATP-bd_su_ClpX"/>
</dbReference>
<dbReference type="InterPro" id="IPR046425">
    <property type="entry name" value="ClpX_bact"/>
</dbReference>
<dbReference type="InterPro" id="IPR027417">
    <property type="entry name" value="P-loop_NTPase"/>
</dbReference>
<dbReference type="InterPro" id="IPR010603">
    <property type="entry name" value="Znf_CppX_C4"/>
</dbReference>
<dbReference type="InterPro" id="IPR038366">
    <property type="entry name" value="Znf_CppX_C4_sf"/>
</dbReference>
<dbReference type="NCBIfam" id="TIGR00382">
    <property type="entry name" value="clpX"/>
    <property type="match status" value="1"/>
</dbReference>
<dbReference type="NCBIfam" id="NF003745">
    <property type="entry name" value="PRK05342.1"/>
    <property type="match status" value="1"/>
</dbReference>
<dbReference type="PANTHER" id="PTHR48102:SF7">
    <property type="entry name" value="ATP-DEPENDENT CLP PROTEASE ATP-BINDING SUBUNIT CLPX-LIKE, MITOCHONDRIAL"/>
    <property type="match status" value="1"/>
</dbReference>
<dbReference type="PANTHER" id="PTHR48102">
    <property type="entry name" value="ATP-DEPENDENT CLP PROTEASE ATP-BINDING SUBUNIT CLPX-LIKE, MITOCHONDRIAL-RELATED"/>
    <property type="match status" value="1"/>
</dbReference>
<dbReference type="Pfam" id="PF07724">
    <property type="entry name" value="AAA_2"/>
    <property type="match status" value="1"/>
</dbReference>
<dbReference type="Pfam" id="PF10431">
    <property type="entry name" value="ClpB_D2-small"/>
    <property type="match status" value="1"/>
</dbReference>
<dbReference type="Pfam" id="PF06689">
    <property type="entry name" value="zf-C4_ClpX"/>
    <property type="match status" value="1"/>
</dbReference>
<dbReference type="SMART" id="SM00382">
    <property type="entry name" value="AAA"/>
    <property type="match status" value="1"/>
</dbReference>
<dbReference type="SMART" id="SM01086">
    <property type="entry name" value="ClpB_D2-small"/>
    <property type="match status" value="1"/>
</dbReference>
<dbReference type="SMART" id="SM00994">
    <property type="entry name" value="zf-C4_ClpX"/>
    <property type="match status" value="1"/>
</dbReference>
<dbReference type="SUPFAM" id="SSF57716">
    <property type="entry name" value="Glucocorticoid receptor-like (DNA-binding domain)"/>
    <property type="match status" value="1"/>
</dbReference>
<dbReference type="SUPFAM" id="SSF52540">
    <property type="entry name" value="P-loop containing nucleoside triphosphate hydrolases"/>
    <property type="match status" value="1"/>
</dbReference>
<dbReference type="PROSITE" id="PS51902">
    <property type="entry name" value="CLPX_ZB"/>
    <property type="match status" value="1"/>
</dbReference>
<reference key="1">
    <citation type="journal article" date="2007" name="Nat. Genet.">
        <title>Genomic analysis of Bartonella identifies type IV secretion systems as host adaptability factors.</title>
        <authorList>
            <person name="Saenz H.L."/>
            <person name="Engel P."/>
            <person name="Stoeckli M.C."/>
            <person name="Lanz C."/>
            <person name="Raddatz G."/>
            <person name="Vayssier-Taussat M."/>
            <person name="Birtles R."/>
            <person name="Schuster S.C."/>
            <person name="Dehio C."/>
        </authorList>
    </citation>
    <scope>NUCLEOTIDE SEQUENCE [LARGE SCALE GENOMIC DNA]</scope>
    <source>
        <strain>CIP 105476 / IBS 506</strain>
    </source>
</reference>
<gene>
    <name evidence="1" type="primary">clpX</name>
    <name type="ordered locus">BT_0877</name>
</gene>
<organism>
    <name type="scientific">Bartonella tribocorum (strain CIP 105476 / IBS 506)</name>
    <dbReference type="NCBI Taxonomy" id="382640"/>
    <lineage>
        <taxon>Bacteria</taxon>
        <taxon>Pseudomonadati</taxon>
        <taxon>Pseudomonadota</taxon>
        <taxon>Alphaproteobacteria</taxon>
        <taxon>Hyphomicrobiales</taxon>
        <taxon>Bartonellaceae</taxon>
        <taxon>Bartonella</taxon>
    </lineage>
</organism>
<comment type="function">
    <text evidence="1">ATP-dependent specificity component of the Clp protease. It directs the protease to specific substrates. Can perform chaperone functions in the absence of ClpP.</text>
</comment>
<comment type="subunit">
    <text evidence="1">Component of the ClpX-ClpP complex. Forms a hexameric ring that, in the presence of ATP, binds to fourteen ClpP subunits assembled into a disk-like structure with a central cavity, resembling the structure of eukaryotic proteasomes.</text>
</comment>
<comment type="similarity">
    <text evidence="1">Belongs to the ClpX chaperone family.</text>
</comment>
<sequence>MSKISNSGNESKNTLYCSFCGKSQHEVRKLIAGPTVFICDECVELCMDIIREENKSSGVKVRDGVPTPQEIIAVLDDYVIGQQHAKRVLSVAVHNHYKRLAHQSKSNDIELAKSNILLVGPTGCGKTYLAQTLARIIDVPFTMADATTLTEAGYVGEDVENIILKLLQAADYNVERAQRGIVYIDEVDKISRKADNPSITRDVSGEGVQQALLKIMEGTIASVPPQGGRKHPQQEFLQVDTTNILFICGGAFAGLERIISGRGEKTSIGFSATVKAPDERCVGEIFRDLEPEDLIKFGLIPEFIGRLPIVATLEDLDVNALMQILSQPKNALVKQYQRLFEMENVELAFHEDALRAIAKKAIERKTGARGLRSIMEKILLETMFELPALEGVQKVVISSDVVDEKARPLYIYSERAEDKENVSA</sequence>
<proteinExistence type="inferred from homology"/>